<feature type="chain" id="PRO_0000046551" description="Probable DNA polymerase">
    <location>
        <begin position="1"/>
        <end position="1202"/>
    </location>
</feature>
<geneLocation type="mitochondrion"/>
<geneLocation type="plasmid">
    <name>pAI2</name>
</geneLocation>
<protein>
    <recommendedName>
        <fullName>Probable DNA polymerase</fullName>
        <ecNumber>2.7.7.7</ecNumber>
    </recommendedName>
</protein>
<evidence type="ECO:0000250" key="1"/>
<evidence type="ECO:0000305" key="2"/>
<accession>P22374</accession>
<proteinExistence type="inferred from homology"/>
<organism>
    <name type="scientific">Ascobolus immersus</name>
    <dbReference type="NCBI Taxonomy" id="5191"/>
    <lineage>
        <taxon>Eukaryota</taxon>
        <taxon>Fungi</taxon>
        <taxon>Dikarya</taxon>
        <taxon>Ascomycota</taxon>
        <taxon>Pezizomycotina</taxon>
        <taxon>Pezizomycetes</taxon>
        <taxon>Pezizales</taxon>
        <taxon>Ascobolaceae</taxon>
        <taxon>Ascobolus</taxon>
    </lineage>
</organism>
<comment type="catalytic activity">
    <reaction>
        <text>DNA(n) + a 2'-deoxyribonucleoside 5'-triphosphate = DNA(n+1) + diphosphate</text>
        <dbReference type="Rhea" id="RHEA:22508"/>
        <dbReference type="Rhea" id="RHEA-COMP:17339"/>
        <dbReference type="Rhea" id="RHEA-COMP:17340"/>
        <dbReference type="ChEBI" id="CHEBI:33019"/>
        <dbReference type="ChEBI" id="CHEBI:61560"/>
        <dbReference type="ChEBI" id="CHEBI:173112"/>
        <dbReference type="EC" id="2.7.7.7"/>
    </reaction>
</comment>
<comment type="subcellular location">
    <subcellularLocation>
        <location evidence="2">Mitochondrion</location>
    </subcellularLocation>
</comment>
<comment type="miscellaneous">
    <text evidence="1">This DNA polymerase requires a protein as a primer.</text>
</comment>
<comment type="similarity">
    <text evidence="2">Belongs to the DNA polymerase type-B family.</text>
</comment>
<dbReference type="EC" id="2.7.7.7"/>
<dbReference type="EMBL" id="X15982">
    <property type="protein sequence ID" value="CAA34106.1"/>
    <property type="molecule type" value="Genomic_DNA"/>
</dbReference>
<dbReference type="PIR" id="S05362">
    <property type="entry name" value="S05362"/>
</dbReference>
<dbReference type="GO" id="GO:0005739">
    <property type="term" value="C:mitochondrion"/>
    <property type="evidence" value="ECO:0007669"/>
    <property type="project" value="UniProtKB-SubCell"/>
</dbReference>
<dbReference type="GO" id="GO:0003677">
    <property type="term" value="F:DNA binding"/>
    <property type="evidence" value="ECO:0007669"/>
    <property type="project" value="UniProtKB-KW"/>
</dbReference>
<dbReference type="GO" id="GO:0003887">
    <property type="term" value="F:DNA-directed DNA polymerase activity"/>
    <property type="evidence" value="ECO:0007669"/>
    <property type="project" value="UniProtKB-KW"/>
</dbReference>
<dbReference type="GO" id="GO:0000166">
    <property type="term" value="F:nucleotide binding"/>
    <property type="evidence" value="ECO:0007669"/>
    <property type="project" value="InterPro"/>
</dbReference>
<dbReference type="GO" id="GO:0006260">
    <property type="term" value="P:DNA replication"/>
    <property type="evidence" value="ECO:0007669"/>
    <property type="project" value="UniProtKB-KW"/>
</dbReference>
<dbReference type="Gene3D" id="1.10.287.690">
    <property type="entry name" value="Helix hairpin bin"/>
    <property type="match status" value="1"/>
</dbReference>
<dbReference type="Gene3D" id="3.90.1600.10">
    <property type="entry name" value="Palm domain of DNA polymerase"/>
    <property type="match status" value="2"/>
</dbReference>
<dbReference type="Gene3D" id="3.30.420.10">
    <property type="entry name" value="Ribonuclease H-like superfamily/Ribonuclease H"/>
    <property type="match status" value="1"/>
</dbReference>
<dbReference type="InterPro" id="IPR006172">
    <property type="entry name" value="DNA-dir_DNA_pol_B"/>
</dbReference>
<dbReference type="InterPro" id="IPR017964">
    <property type="entry name" value="DNA-dir_DNA_pol_B_CS"/>
</dbReference>
<dbReference type="InterPro" id="IPR004868">
    <property type="entry name" value="DNA-dir_DNA_pol_B_mt/vir"/>
</dbReference>
<dbReference type="InterPro" id="IPR015833">
    <property type="entry name" value="DNA-dir_DNA_pol_B_mt_lin_plsmd"/>
</dbReference>
<dbReference type="InterPro" id="IPR043502">
    <property type="entry name" value="DNA/RNA_pol_sf"/>
</dbReference>
<dbReference type="InterPro" id="IPR023211">
    <property type="entry name" value="DNA_pol_palm_dom_sf"/>
</dbReference>
<dbReference type="InterPro" id="IPR012337">
    <property type="entry name" value="RNaseH-like_sf"/>
</dbReference>
<dbReference type="InterPro" id="IPR036397">
    <property type="entry name" value="RNaseH_sf"/>
</dbReference>
<dbReference type="PANTHER" id="PTHR33568">
    <property type="entry name" value="DNA POLYMERASE"/>
    <property type="match status" value="1"/>
</dbReference>
<dbReference type="PANTHER" id="PTHR33568:SF3">
    <property type="entry name" value="DNA-DIRECTED DNA POLYMERASE"/>
    <property type="match status" value="1"/>
</dbReference>
<dbReference type="Pfam" id="PF03175">
    <property type="entry name" value="DNA_pol_B_2"/>
    <property type="match status" value="1"/>
</dbReference>
<dbReference type="PIRSF" id="PIRSF006517">
    <property type="entry name" value="DPol_mt_plasmid"/>
    <property type="match status" value="1"/>
</dbReference>
<dbReference type="SMART" id="SM00486">
    <property type="entry name" value="POLBc"/>
    <property type="match status" value="1"/>
</dbReference>
<dbReference type="SUPFAM" id="SSF56672">
    <property type="entry name" value="DNA/RNA polymerases"/>
    <property type="match status" value="1"/>
</dbReference>
<dbReference type="SUPFAM" id="SSF53098">
    <property type="entry name" value="Ribonuclease H-like"/>
    <property type="match status" value="1"/>
</dbReference>
<dbReference type="PROSITE" id="PS00116">
    <property type="entry name" value="DNA_POLYMERASE_B"/>
    <property type="match status" value="1"/>
</dbReference>
<reference key="1">
    <citation type="journal article" date="1989" name="Mol. Gen. Genet.">
        <title>In organello replication and viral affinity of linear, extrachromosomal DNA of the ascomycete Ascobolus immersus.</title>
        <authorList>
            <person name="Kempken F."/>
            <person name="Meinhardt F."/>
            <person name="Esser K."/>
        </authorList>
    </citation>
    <scope>NUCLEOTIDE SEQUENCE [GENOMIC DNA]</scope>
    <source>
        <strain>2/I</strain>
    </source>
</reference>
<name>DPOM_ASCIM</name>
<sequence>QFSIKVMQSSYVGLRSTVQFLQLSQIIWIKSRIAKSENDYINSMKKFLSHKKQNNRKFHTRSMSNGLGSLNLQKRPTPSPTVLNNKFLPTRNQYHSEDINNNILFDIIIKETDKGLKKCVLIGLNLTTNKIFNMEYIDLNTSNRKFKIFVANNLINIKNNGINIDNLYIPKRINSKTLTDLITLSFPNIKVQWYLKSEITNLFLKSDYTNFIKEINERKTLGKSILSKLIIYYNDSSPHCNIGKSSRKVTAISHTKRDIHTSTENNHKKDLFGWHRFNSSNYYDCIDSGALTIEINKLFEYYKDNFTQPFFVVNAKIKFPTGNVRSIGFGNVTTLTDKETLIKTLAIFLEREDIHTVMSYDEGDIDESKFPKGSLSFDFKPLKTIEGTKYANYTFPIKKDIVVKDINKKINFNGLDLPKTMDLSKWPNLKLNKDKTSGEIRMTIKNKNNQSYDIIGHMIINDGENVITFNRAVDNSIIKIFTVTDSMGNTNDPNLFKRIVEEKGNQTVYVYENNETVCVVQDKKFGFISKIAKNKTVNLKSISTLDLETRMDTNNRLIPICMSYYNNKKLNTFLFKDDWQEEMLAAFKTLLKSTNHGKKFYVHNLAHFDSVFILDTLSKLGKIDIIMRDDKIMKLKITFKIPGKNTEYSISFLDSLLMLPNSLDNLSKAFNIENKKSVFPLKFTNGAVTPFNYIGAVPGYEYFYNTPNKKFTKDDYKKYCKDFNNNWDFNKELKNYCEIDCLALHDILTLFAKMIHNEFSVDITRYVSLSSITFAIFRTNFLPENKIPNITCTKLHYILKQAYTGGYCDVFKPEGKNIHSYDINSLYPSAMAKFDMPTGTPLHILGDPYKFTKDPFGFVFAEVTAPDLKVPIIQTRVQTSGGVRTVAPIGTFKGWYLLDELINAKKYGYTFKISEAYLFERLNIFKEYIHRLYTIKSSYTPDDPMYFIAKLLMNSLYGRFGMDPITIKYSVLTPEESEEKLKNSSCIEATTLPSGNVLFKENKPLGEFSNLNTSVPISAAIAAYSRMIMSEYLIKYADNLYAVDTDGIKVDTEIDKKYVSDKELGLMKHEYTFKEAVFVAPKVYGGLFDKPYKNKVEIVKVKGLKEPIQYSDLKDVYIKSLLKLFIILNFLRQLALSTIVIKEQPYSLRVSSFKRVLVFNESGKIISTLPLKLENDKIVSNPHLIVNSEGNPSAFKLSLIKI</sequence>
<keyword id="KW-0235">DNA replication</keyword>
<keyword id="KW-0238">DNA-binding</keyword>
<keyword id="KW-0239">DNA-directed DNA polymerase</keyword>
<keyword id="KW-0496">Mitochondrion</keyword>
<keyword id="KW-0548">Nucleotidyltransferase</keyword>
<keyword id="KW-0614">Plasmid</keyword>
<keyword id="KW-0808">Transferase</keyword>